<gene>
    <name evidence="1" type="primary">apt</name>
    <name type="ordered locus">BT_3267</name>
</gene>
<evidence type="ECO:0000255" key="1">
    <source>
        <dbReference type="HAMAP-Rule" id="MF_00004"/>
    </source>
</evidence>
<feature type="chain" id="PRO_0000149355" description="Adenine phosphoribosyltransferase">
    <location>
        <begin position="1"/>
        <end position="176"/>
    </location>
</feature>
<sequence length="176" mass="19781">MIMSKETLIKSIREIPDFPIPGILFYDVTTLFKDPWCLQELSNIMFEMYKDKGITKVVGIESRGFIMGPILATRLNAGFIPIRKPGKLPAEVIEESYDKEYGTDTVQIHKDALDENDVVLLHDDLLATGGTMKAACELVKKLKPKKVYVNFIIELKDLNGKSVFGDDVEVESVLTL</sequence>
<name>APT_BACTN</name>
<reference key="1">
    <citation type="journal article" date="2003" name="Science">
        <title>A genomic view of the human-Bacteroides thetaiotaomicron symbiosis.</title>
        <authorList>
            <person name="Xu J."/>
            <person name="Bjursell M.K."/>
            <person name="Himrod J."/>
            <person name="Deng S."/>
            <person name="Carmichael L.K."/>
            <person name="Chiang H.C."/>
            <person name="Hooper L.V."/>
            <person name="Gordon J.I."/>
        </authorList>
    </citation>
    <scope>NUCLEOTIDE SEQUENCE [LARGE SCALE GENOMIC DNA]</scope>
    <source>
        <strain>ATCC 29148 / DSM 2079 / JCM 5827 / CCUG 10774 / NCTC 10582 / VPI-5482 / E50</strain>
    </source>
</reference>
<comment type="function">
    <text evidence="1">Catalyzes a salvage reaction resulting in the formation of AMP, that is energically less costly than de novo synthesis.</text>
</comment>
<comment type="catalytic activity">
    <reaction evidence="1">
        <text>AMP + diphosphate = 5-phospho-alpha-D-ribose 1-diphosphate + adenine</text>
        <dbReference type="Rhea" id="RHEA:16609"/>
        <dbReference type="ChEBI" id="CHEBI:16708"/>
        <dbReference type="ChEBI" id="CHEBI:33019"/>
        <dbReference type="ChEBI" id="CHEBI:58017"/>
        <dbReference type="ChEBI" id="CHEBI:456215"/>
        <dbReference type="EC" id="2.4.2.7"/>
    </reaction>
</comment>
<comment type="pathway">
    <text evidence="1">Purine metabolism; AMP biosynthesis via salvage pathway; AMP from adenine: step 1/1.</text>
</comment>
<comment type="subunit">
    <text evidence="1">Homodimer.</text>
</comment>
<comment type="subcellular location">
    <subcellularLocation>
        <location evidence="1">Cytoplasm</location>
    </subcellularLocation>
</comment>
<comment type="similarity">
    <text evidence="1">Belongs to the purine/pyrimidine phosphoribosyltransferase family.</text>
</comment>
<proteinExistence type="inferred from homology"/>
<dbReference type="EC" id="2.4.2.7" evidence="1"/>
<dbReference type="EMBL" id="AE015928">
    <property type="protein sequence ID" value="AAO78373.1"/>
    <property type="molecule type" value="Genomic_DNA"/>
</dbReference>
<dbReference type="RefSeq" id="NP_812179.1">
    <property type="nucleotide sequence ID" value="NC_004663.1"/>
</dbReference>
<dbReference type="RefSeq" id="WP_008762874.1">
    <property type="nucleotide sequence ID" value="NZ_UYXG01000003.1"/>
</dbReference>
<dbReference type="SMR" id="Q8A2N8"/>
<dbReference type="FunCoup" id="Q8A2N8">
    <property type="interactions" value="402"/>
</dbReference>
<dbReference type="STRING" id="226186.BT_3267"/>
<dbReference type="PaxDb" id="226186-BT_3267"/>
<dbReference type="EnsemblBacteria" id="AAO78373">
    <property type="protein sequence ID" value="AAO78373"/>
    <property type="gene ID" value="BT_3267"/>
</dbReference>
<dbReference type="KEGG" id="bth:BT_3267"/>
<dbReference type="PATRIC" id="fig|226186.12.peg.3332"/>
<dbReference type="eggNOG" id="COG0503">
    <property type="taxonomic scope" value="Bacteria"/>
</dbReference>
<dbReference type="HOGENOM" id="CLU_063339_3_0_10"/>
<dbReference type="InParanoid" id="Q8A2N8"/>
<dbReference type="OrthoDB" id="9803963at2"/>
<dbReference type="UniPathway" id="UPA00588">
    <property type="reaction ID" value="UER00646"/>
</dbReference>
<dbReference type="Proteomes" id="UP000001414">
    <property type="component" value="Chromosome"/>
</dbReference>
<dbReference type="GO" id="GO:0005737">
    <property type="term" value="C:cytoplasm"/>
    <property type="evidence" value="ECO:0000318"/>
    <property type="project" value="GO_Central"/>
</dbReference>
<dbReference type="GO" id="GO:0002055">
    <property type="term" value="F:adenine binding"/>
    <property type="evidence" value="ECO:0000318"/>
    <property type="project" value="GO_Central"/>
</dbReference>
<dbReference type="GO" id="GO:0003999">
    <property type="term" value="F:adenine phosphoribosyltransferase activity"/>
    <property type="evidence" value="ECO:0000318"/>
    <property type="project" value="GO_Central"/>
</dbReference>
<dbReference type="GO" id="GO:0016208">
    <property type="term" value="F:AMP binding"/>
    <property type="evidence" value="ECO:0000318"/>
    <property type="project" value="GO_Central"/>
</dbReference>
<dbReference type="GO" id="GO:0006168">
    <property type="term" value="P:adenine salvage"/>
    <property type="evidence" value="ECO:0000318"/>
    <property type="project" value="GO_Central"/>
</dbReference>
<dbReference type="GO" id="GO:0044209">
    <property type="term" value="P:AMP salvage"/>
    <property type="evidence" value="ECO:0000318"/>
    <property type="project" value="GO_Central"/>
</dbReference>
<dbReference type="GO" id="GO:0006166">
    <property type="term" value="P:purine ribonucleoside salvage"/>
    <property type="evidence" value="ECO:0007669"/>
    <property type="project" value="UniProtKB-KW"/>
</dbReference>
<dbReference type="CDD" id="cd06223">
    <property type="entry name" value="PRTases_typeI"/>
    <property type="match status" value="1"/>
</dbReference>
<dbReference type="FunFam" id="3.40.50.2020:FF:000021">
    <property type="entry name" value="Adenine phosphoribosyltransferase"/>
    <property type="match status" value="1"/>
</dbReference>
<dbReference type="Gene3D" id="3.40.50.2020">
    <property type="match status" value="1"/>
</dbReference>
<dbReference type="HAMAP" id="MF_00004">
    <property type="entry name" value="Aden_phosphoribosyltr"/>
    <property type="match status" value="1"/>
</dbReference>
<dbReference type="InterPro" id="IPR005764">
    <property type="entry name" value="Ade_phspho_trans"/>
</dbReference>
<dbReference type="InterPro" id="IPR000836">
    <property type="entry name" value="PRibTrfase_dom"/>
</dbReference>
<dbReference type="InterPro" id="IPR029057">
    <property type="entry name" value="PRTase-like"/>
</dbReference>
<dbReference type="InterPro" id="IPR050054">
    <property type="entry name" value="UPRTase/APRTase"/>
</dbReference>
<dbReference type="NCBIfam" id="TIGR01090">
    <property type="entry name" value="apt"/>
    <property type="match status" value="1"/>
</dbReference>
<dbReference type="NCBIfam" id="NF002634">
    <property type="entry name" value="PRK02304.1-3"/>
    <property type="match status" value="1"/>
</dbReference>
<dbReference type="NCBIfam" id="NF002636">
    <property type="entry name" value="PRK02304.1-5"/>
    <property type="match status" value="1"/>
</dbReference>
<dbReference type="PANTHER" id="PTHR32315">
    <property type="entry name" value="ADENINE PHOSPHORIBOSYLTRANSFERASE"/>
    <property type="match status" value="1"/>
</dbReference>
<dbReference type="PANTHER" id="PTHR32315:SF3">
    <property type="entry name" value="ADENINE PHOSPHORIBOSYLTRANSFERASE"/>
    <property type="match status" value="1"/>
</dbReference>
<dbReference type="Pfam" id="PF00156">
    <property type="entry name" value="Pribosyltran"/>
    <property type="match status" value="1"/>
</dbReference>
<dbReference type="SUPFAM" id="SSF53271">
    <property type="entry name" value="PRTase-like"/>
    <property type="match status" value="1"/>
</dbReference>
<organism>
    <name type="scientific">Bacteroides thetaiotaomicron (strain ATCC 29148 / DSM 2079 / JCM 5827 / CCUG 10774 / NCTC 10582 / VPI-5482 / E50)</name>
    <dbReference type="NCBI Taxonomy" id="226186"/>
    <lineage>
        <taxon>Bacteria</taxon>
        <taxon>Pseudomonadati</taxon>
        <taxon>Bacteroidota</taxon>
        <taxon>Bacteroidia</taxon>
        <taxon>Bacteroidales</taxon>
        <taxon>Bacteroidaceae</taxon>
        <taxon>Bacteroides</taxon>
    </lineage>
</organism>
<accession>Q8A2N8</accession>
<protein>
    <recommendedName>
        <fullName evidence="1">Adenine phosphoribosyltransferase</fullName>
        <shortName evidence="1">APRT</shortName>
        <ecNumber evidence="1">2.4.2.7</ecNumber>
    </recommendedName>
</protein>
<keyword id="KW-0963">Cytoplasm</keyword>
<keyword id="KW-0328">Glycosyltransferase</keyword>
<keyword id="KW-0660">Purine salvage</keyword>
<keyword id="KW-1185">Reference proteome</keyword>
<keyword id="KW-0808">Transferase</keyword>